<comment type="function">
    <text evidence="1 5 8">Cofactor involved in the regulation of various cellular mechanisms such as actin regulation, autophagy, chromatin regulation and DNA repair (PubMed:18451878, PubMed:31727855). In non-stress conditions, interacts with cofactor JMY in the cytoplasm which prevents JMY's actin nucleation activity and ability to activate the Arp2/3 complex. Acts as a negative regulator of nutrient stress-induced autophagy by preventing JMY's interaction with MAP1LC3B, thereby preventing autophagosome formation (By similarity). Involves in tubulin autoregulation by promoting its degradation in response to excess soluble tubulin (PubMed:31727855). To do so, associates with the active ribosome near the ribosome exit tunnel and with nascent tubulin polypeptides early during their translation, triggering tubulin mRNA-targeted degradation (PubMed:31727855). Following DNA damage, phosphorylated by DNA damage responsive protein kinases ATM and CHEK2, leading to its nuclear accumulation and stability. Nuclear TTC5/STRAP promotes the assembly of a stress-responsive p53/TP53 coactivator complex, which includes the coactivators JMY and p300, thereby increasing p53/TP53-dependent transcription and apoptosis. Also recruits arginine methyltransferase PRMT5 to p53/TP53 when DNA is damaged, allowing PRMT5 to methylate p53/TP53. In DNA stress conditions, also prevents p53/TP53 degradation by E3 ubiquitin ligase MDM2 (By similarity). Upon heat-shock stress, forms a chromatin-associated complex with heat-shock factor 1 HSF1 and p300/EP300 to stimulate heat-shock-responsive transcription, thereby increasing cell survival (PubMed:18451878). Mitochondrial TTC5/STRAP interacts with ATP synthase subunit beta ATP5F1B which decreased ATP synthase activity and lowers mitochondrial ATP production, thereby regulating cellular respiration and mitochondrial-dependent apoptosis. Mitochondrial TTC5/STRAP also regulates p53/TP53-mediated apoptosis (By similarity).</text>
</comment>
<comment type="subunit">
    <text evidence="1 5 6 8">Interacts with JMY and p300/EP300; the interaction occurs in the nucleus and augments the association between JMY and p300/EP300 in response to DNA damage (By similarity). Forms a complex with HSF1 and p300/EP300; these interactions augment chromatin-bound HSF1 and p300/EP300 histone acetyltransferase activity, resulting in enhanced heat-shock-responsive transcription (PubMed:18451878). Interacts with PRMT5; the interaction is DNA damage-dependent and promotes PRMT5 interaction with p53/TP53 and subsequent methylation (PubMed:19011621). Interacts with JMY; the interaction occurs in the cytoplasm and results in the inhibition of JYM's nucleation activity (By similarity). Interacts with ribosome-coding tubulin (via 60S subunit 28S rRNA and protein uL24/RPL26) and the N-terminal of nascent tubulin polypeptide (via alpha-tubulin MREC motif and beta-tubulin MREI motif); these interactions result in tubulin mRNA-targeted degradation (PubMed:31727855). Interacts with ATP5F1B; the interaction occurs in the mitochondria and results in ATP production decrease. Interacts with p53/TP53; the interaction occurs in the mitochondria and results in increased apoptosis (By similarity).</text>
</comment>
<comment type="interaction">
    <interactant intactId="EBI-9526213">
        <id>Q8N0Z6</id>
    </interactant>
    <interactant intactId="EBI-1383687">
        <id>Q9UQM7</id>
        <label>CAMK2A</label>
    </interactant>
    <organismsDiffer>false</organismsDiffer>
    <experiments>3</experiments>
</comment>
<comment type="interaction">
    <interactant intactId="EBI-9526213">
        <id>Q8N0Z6</id>
    </interactant>
    <interactant intactId="EBI-1058722">
        <id>Q13554</id>
        <label>CAMK2B</label>
    </interactant>
    <organismsDiffer>false</organismsDiffer>
    <experiments>3</experiments>
</comment>
<comment type="interaction">
    <interactant intactId="EBI-9526213">
        <id>Q8N0Z6</id>
    </interactant>
    <interactant intactId="EBI-11523526">
        <id>Q13554-3</id>
        <label>CAMK2B</label>
    </interactant>
    <organismsDiffer>false</organismsDiffer>
    <experiments>3</experiments>
</comment>
<comment type="interaction">
    <interactant intactId="EBI-9526213">
        <id>Q8N0Z6</id>
    </interactant>
    <interactant intactId="EBI-351018">
        <id>Q13557</id>
        <label>CAMK2D</label>
    </interactant>
    <organismsDiffer>false</organismsDiffer>
    <experiments>4</experiments>
</comment>
<comment type="interaction">
    <interactant intactId="EBI-9526213">
        <id>Q8N0Z6</id>
    </interactant>
    <interactant intactId="EBI-11534483">
        <id>Q13557-8</id>
        <label>CAMK2D</label>
    </interactant>
    <organismsDiffer>false</organismsDiffer>
    <experiments>3</experiments>
</comment>
<comment type="interaction">
    <interactant intactId="EBI-9526213">
        <id>Q8N0Z6</id>
    </interactant>
    <interactant intactId="EBI-12020154">
        <id>Q13555-5</id>
        <label>CAMK2G</label>
    </interactant>
    <organismsDiffer>false</organismsDiffer>
    <experiments>3</experiments>
</comment>
<comment type="interaction">
    <interactant intactId="EBI-9526213">
        <id>Q8N0Z6</id>
    </interactant>
    <interactant intactId="EBI-2559016">
        <id>Q6NZI2</id>
        <label>CAVIN1</label>
    </interactant>
    <organismsDiffer>false</organismsDiffer>
    <experiments>3</experiments>
</comment>
<comment type="interaction">
    <interactant intactId="EBI-9526213">
        <id>Q8N0Z6</id>
    </interactant>
    <interactant intactId="EBI-742054">
        <id>Q96D03</id>
        <label>DDIT4L</label>
    </interactant>
    <organismsDiffer>false</organismsDiffer>
    <experiments>3</experiments>
</comment>
<comment type="interaction">
    <interactant intactId="EBI-9526213">
        <id>Q8N0Z6</id>
    </interactant>
    <interactant intactId="EBI-11163335">
        <id>Q9NYA3</id>
        <label>GOLGA6A</label>
    </interactant>
    <organismsDiffer>false</organismsDiffer>
    <experiments>3</experiments>
</comment>
<comment type="interaction">
    <interactant intactId="EBI-9526213">
        <id>Q8N0Z6</id>
    </interactant>
    <interactant intactId="EBI-1052734">
        <id>Q7Z353</id>
        <label>HDX</label>
    </interactant>
    <organismsDiffer>false</organismsDiffer>
    <experiments>3</experiments>
</comment>
<comment type="subcellular location">
    <subcellularLocation>
        <location evidence="1">Nucleus</location>
    </subcellularLocation>
    <subcellularLocation>
        <location evidence="8">Cytoplasm</location>
    </subcellularLocation>
    <subcellularLocation>
        <location evidence="1">Cytoplasmic vesicle</location>
    </subcellularLocation>
    <subcellularLocation>
        <location evidence="1">Mitochondrion matrix</location>
    </subcellularLocation>
    <text evidence="1">Phosphorylation at Ser-203 results in nuclear localization, while unphosphorylated protein localizes to the cytoplasm. Nuclear localization may be necessary for DNA damage-dependent stabilization of the protein.</text>
</comment>
<comment type="induction">
    <text evidence="5">Induced upon heat-shock stress (at protein level).</text>
</comment>
<comment type="PTM">
    <text evidence="1">Phosphorylation by ATM kinase induces nuclear accumulation while interfering with nuclear export, and phosphorylation by CHEK2 kinase enhances nuclear stability.</text>
</comment>
<comment type="disease" evidence="9">
    <disease id="DI-06068">
        <name>Neurodevelopmental disorder with cerebral atrophy and variable facial dysmorphism</name>
        <acronym>NEDCAFD</acronym>
        <description>An autosomal recessive disorder characterized by global developmental delay apparent from birth, moderate-to-severe intellectual disability, poor or absent speech, and hypotonia. Most patients have variable dysmorphic facial features. Brain imaging shows corpus callosum agenesis, mild ventriculomegaly, simplified gyral pattern, and cerebral atrophy.</description>
        <dbReference type="MIM" id="619244"/>
    </disease>
    <text>The disease is caused by variants affecting the gene represented in this entry.</text>
</comment>
<sequence>MMADEEEEVKPILQKLQELVDQLYSFRDCYFETHSVEDAGRKQQDVQKEMEKTLQQMEEVVGSVQGKAQVLMLTGKALNVTPDYSPKAEELLSKAVKLEPELVEAWNQLGEVYWKKGDVAAAHTCFSGALTHCRNKVSLQNLSMVLRQLRTDTEDEHSHHVMDSVRQAKLAVQMDVHDGRSWYILGNSYLSLYFSTGQNPKISQQALSAYAQAEKVDRKASSNPDLHLNRATLHKYEESYGEALEGFSRAAALDPAWPEPRQREQQLLEFLDRLTSLLESKGKVKTKKLQSMLGSLRPAHLGPCSDGHYQSASGQKVTLELKPLSTLQPGVNSGAVILGKVVFSLTTEEKVPFTFGLVDSDGPCYAVMVYNIVQSWGVLIGDSVAIPEPNLRLHRIQHKGKDYSFSSVRVETPLLLVVNGKPQGSSSQAVATVASRPQCE</sequence>
<protein>
    <recommendedName>
        <fullName evidence="11">Tetratricopeptide repeat protein 5</fullName>
        <shortName evidence="11">TPR repeat protein 5</shortName>
    </recommendedName>
    <alternativeName>
        <fullName evidence="10">Stress-responsive activator of p300</fullName>
        <shortName evidence="10">Protein Strap</shortName>
    </alternativeName>
</protein>
<proteinExistence type="evidence at protein level"/>
<feature type="chain" id="PRO_0000106381" description="Tetratricopeptide repeat protein 5">
    <location>
        <begin position="1"/>
        <end position="440"/>
    </location>
</feature>
<feature type="repeat" description="TPR 1" evidence="2 7">
    <location>
        <begin position="7"/>
        <end position="61"/>
    </location>
</feature>
<feature type="repeat" description="TPR 2" evidence="2 7">
    <location>
        <begin position="68"/>
        <end position="98"/>
    </location>
</feature>
<feature type="repeat" description="TPR 3" evidence="2 7">
    <location>
        <begin position="103"/>
        <end position="130"/>
    </location>
</feature>
<feature type="repeat" description="TPR 4" evidence="2 7">
    <location>
        <begin position="136"/>
        <end position="174"/>
    </location>
</feature>
<feature type="repeat" description="TPR 5" evidence="2 7">
    <location>
        <begin position="179"/>
        <end position="216"/>
    </location>
</feature>
<feature type="repeat" description="TPR 6" evidence="2 7">
    <location>
        <begin position="224"/>
        <end position="253"/>
    </location>
</feature>
<feature type="region of interest" description="Mediates interaction with 28S rRNA of ribosome-coding tubulin" evidence="8 13">
    <location>
        <begin position="285"/>
        <end position="287"/>
    </location>
</feature>
<feature type="short sequence motif" description="Nuclear export signal" evidence="1">
    <location>
        <begin position="13"/>
        <end position="24"/>
    </location>
</feature>
<feature type="site" description="Mediates interaction with N-terminal MREI motif of beta-tubulin nascent chain" evidence="8 13">
    <location>
        <position position="147"/>
    </location>
</feature>
<feature type="site" description="Mediates interaction with N-terminal MREI motif of beta-tubulin nascent chain" evidence="8 13">
    <location>
        <position position="225"/>
    </location>
</feature>
<feature type="site" description="Mediates interaction with N-terminal MREI motif of beta-tubulin nascent chain" evidence="8 13">
    <location>
        <position position="259"/>
    </location>
</feature>
<feature type="modified residue" description="Phosphoserine; by ATM" evidence="1">
    <location>
        <position position="203"/>
    </location>
</feature>
<feature type="modified residue" description="Phosphoserine; by CHEK2" evidence="1">
    <location>
        <position position="221"/>
    </location>
</feature>
<feature type="sequence variant" id="VAR_034131" description="In dbSNP:rs34675160.">
    <original>Q</original>
    <variation>H</variation>
    <location>
        <position position="14"/>
    </location>
</feature>
<feature type="sequence variant" id="VAR_055293" description="In dbSNP:rs3742945." evidence="3 4">
    <original>Q</original>
    <variation>R</variation>
    <location>
        <position position="47"/>
    </location>
</feature>
<feature type="sequence variant" id="VAR_085226" description="In NEDCAFD; uncertain significance." evidence="9">
    <original>Y</original>
    <variation>C</variation>
    <location>
        <position position="210"/>
    </location>
</feature>
<feature type="sequence variant" id="VAR_085227" description="In NEDCAFD; uncertain significance; dbSNP:rs749799203." evidence="9">
    <original>A</original>
    <variation>V</variation>
    <location>
        <position position="231"/>
    </location>
</feature>
<feature type="sequence variant" id="VAR_085228" description="In NEDCAFD; likely pathogenic." evidence="9">
    <location>
        <begin position="263"/>
        <end position="440"/>
    </location>
</feature>
<feature type="sequence variant" id="VAR_085229" description="In NEDCAFD; likely pathogenic; decreased TTC5 transcript levels." evidence="9">
    <location>
        <begin position="395"/>
        <end position="440"/>
    </location>
</feature>
<feature type="mutagenesis site" description="No change in interaction with N-terminal MREI motif of beta-tubulin nascent chain." evidence="8">
    <original>D</original>
    <variation>A</variation>
    <location>
        <position position="83"/>
    </location>
</feature>
<feature type="mutagenesis site" description="Loss of interaction with N-terminal MREI motif of beta-tubulin nascent chain. Loss of interaction with 28S rRNA of ribosome-coding tubulin. Loss of tubulin autoregulation and accurate mitosis." evidence="8">
    <original>R</original>
    <variation>A</variation>
    <location>
        <position position="147"/>
    </location>
</feature>
<feature type="mutagenesis site" description="Partial loss of interaction with N-terminal MREI motif of beta-tubulin nascent chain. Loss of interaction with N-terminal MREI motif of beta-tubulin nascent chain; when associated with A-259." evidence="8">
    <original>D</original>
    <variation>A</variation>
    <location>
        <position position="225"/>
    </location>
</feature>
<feature type="mutagenesis site" description="No change in interaction with 28S rRNA of ribosome-coding tubulin." evidence="8">
    <original>D</original>
    <variation>A</variation>
    <location>
        <position position="254"/>
    </location>
</feature>
<feature type="mutagenesis site" description="Partial loss of interaction with N-terminal MREI motif of beta-tubulin nascent chain. Loss of interaction with N-terminal MREI motif of beta-tubulin nascent chain; when associated with D-225." evidence="8">
    <original>E</original>
    <variation>A</variation>
    <location>
        <position position="259"/>
    </location>
</feature>
<feature type="mutagenesis site" description="Loss of interaction with 28S rRNA of ribosome-coding tubulin, when associated with E-287. No change in interaction with N-terminal MREI motif of beta-tubulin nascent chain, when associated with E-287. Loss of tubulin autoregulation and accurate mitosis, when associated with E-287." evidence="8">
    <original>K</original>
    <variation>E</variation>
    <location>
        <position position="285"/>
    </location>
</feature>
<feature type="mutagenesis site" description="Loss of interaction with 28S rRNA of ribosome-coding tubulin, when associated with E-285. No change in interaction with N-terminal MREI motif of beta-tubulin nascent chain, when associated with E-285. Loss of tubulin autoregulation and accurate mitosis, when associated with E-285." evidence="8">
    <original>K</original>
    <variation>E</variation>
    <location>
        <position position="287"/>
    </location>
</feature>
<feature type="helix" evidence="14">
    <location>
        <begin position="262"/>
        <end position="280"/>
    </location>
</feature>
<feature type="helix" evidence="14">
    <location>
        <begin position="281"/>
        <end position="283"/>
    </location>
</feature>
<feature type="helix" evidence="14">
    <location>
        <begin position="286"/>
        <end position="294"/>
    </location>
</feature>
<feature type="helix" evidence="14">
    <location>
        <begin position="298"/>
        <end position="304"/>
    </location>
</feature>
<feature type="helix" evidence="14">
    <location>
        <begin position="324"/>
        <end position="326"/>
    </location>
</feature>
<feature type="strand" evidence="14">
    <location>
        <begin position="329"/>
        <end position="331"/>
    </location>
</feature>
<feature type="strand" evidence="14">
    <location>
        <begin position="335"/>
        <end position="345"/>
    </location>
</feature>
<feature type="strand" evidence="14">
    <location>
        <begin position="352"/>
        <end position="362"/>
    </location>
</feature>
<feature type="strand" evidence="14">
    <location>
        <begin position="365"/>
        <end position="369"/>
    </location>
</feature>
<feature type="strand" evidence="14">
    <location>
        <begin position="383"/>
        <end position="388"/>
    </location>
</feature>
<feature type="strand" evidence="14">
    <location>
        <begin position="390"/>
        <end position="398"/>
    </location>
</feature>
<feature type="strand" evidence="14">
    <location>
        <begin position="401"/>
        <end position="411"/>
    </location>
</feature>
<feature type="helix" evidence="14">
    <location>
        <begin position="413"/>
        <end position="415"/>
    </location>
</feature>
<reference key="1">
    <citation type="journal article" date="2004" name="Nat. Genet.">
        <title>Complete sequencing and characterization of 21,243 full-length human cDNAs.</title>
        <authorList>
            <person name="Ota T."/>
            <person name="Suzuki Y."/>
            <person name="Nishikawa T."/>
            <person name="Otsuki T."/>
            <person name="Sugiyama T."/>
            <person name="Irie R."/>
            <person name="Wakamatsu A."/>
            <person name="Hayashi K."/>
            <person name="Sato H."/>
            <person name="Nagai K."/>
            <person name="Kimura K."/>
            <person name="Makita H."/>
            <person name="Sekine M."/>
            <person name="Obayashi M."/>
            <person name="Nishi T."/>
            <person name="Shibahara T."/>
            <person name="Tanaka T."/>
            <person name="Ishii S."/>
            <person name="Yamamoto J."/>
            <person name="Saito K."/>
            <person name="Kawai Y."/>
            <person name="Isono Y."/>
            <person name="Nakamura Y."/>
            <person name="Nagahari K."/>
            <person name="Murakami K."/>
            <person name="Yasuda T."/>
            <person name="Iwayanagi T."/>
            <person name="Wagatsuma M."/>
            <person name="Shiratori A."/>
            <person name="Sudo H."/>
            <person name="Hosoiri T."/>
            <person name="Kaku Y."/>
            <person name="Kodaira H."/>
            <person name="Kondo H."/>
            <person name="Sugawara M."/>
            <person name="Takahashi M."/>
            <person name="Kanda K."/>
            <person name="Yokoi T."/>
            <person name="Furuya T."/>
            <person name="Kikkawa E."/>
            <person name="Omura Y."/>
            <person name="Abe K."/>
            <person name="Kamihara K."/>
            <person name="Katsuta N."/>
            <person name="Sato K."/>
            <person name="Tanikawa M."/>
            <person name="Yamazaki M."/>
            <person name="Ninomiya K."/>
            <person name="Ishibashi T."/>
            <person name="Yamashita H."/>
            <person name="Murakawa K."/>
            <person name="Fujimori K."/>
            <person name="Tanai H."/>
            <person name="Kimata M."/>
            <person name="Watanabe M."/>
            <person name="Hiraoka S."/>
            <person name="Chiba Y."/>
            <person name="Ishida S."/>
            <person name="Ono Y."/>
            <person name="Takiguchi S."/>
            <person name="Watanabe S."/>
            <person name="Yosida M."/>
            <person name="Hotuta T."/>
            <person name="Kusano J."/>
            <person name="Kanehori K."/>
            <person name="Takahashi-Fujii A."/>
            <person name="Hara H."/>
            <person name="Tanase T.-O."/>
            <person name="Nomura Y."/>
            <person name="Togiya S."/>
            <person name="Komai F."/>
            <person name="Hara R."/>
            <person name="Takeuchi K."/>
            <person name="Arita M."/>
            <person name="Imose N."/>
            <person name="Musashino K."/>
            <person name="Yuuki H."/>
            <person name="Oshima A."/>
            <person name="Sasaki N."/>
            <person name="Aotsuka S."/>
            <person name="Yoshikawa Y."/>
            <person name="Matsunawa H."/>
            <person name="Ichihara T."/>
            <person name="Shiohata N."/>
            <person name="Sano S."/>
            <person name="Moriya S."/>
            <person name="Momiyama H."/>
            <person name="Satoh N."/>
            <person name="Takami S."/>
            <person name="Terashima Y."/>
            <person name="Suzuki O."/>
            <person name="Nakagawa S."/>
            <person name="Senoh A."/>
            <person name="Mizoguchi H."/>
            <person name="Goto Y."/>
            <person name="Shimizu F."/>
            <person name="Wakebe H."/>
            <person name="Hishigaki H."/>
            <person name="Watanabe T."/>
            <person name="Sugiyama A."/>
            <person name="Takemoto M."/>
            <person name="Kawakami B."/>
            <person name="Yamazaki M."/>
            <person name="Watanabe K."/>
            <person name="Kumagai A."/>
            <person name="Itakura S."/>
            <person name="Fukuzumi Y."/>
            <person name="Fujimori Y."/>
            <person name="Komiyama M."/>
            <person name="Tashiro H."/>
            <person name="Tanigami A."/>
            <person name="Fujiwara T."/>
            <person name="Ono T."/>
            <person name="Yamada K."/>
            <person name="Fujii Y."/>
            <person name="Ozaki K."/>
            <person name="Hirao M."/>
            <person name="Ohmori Y."/>
            <person name="Kawabata A."/>
            <person name="Hikiji T."/>
            <person name="Kobatake N."/>
            <person name="Inagaki H."/>
            <person name="Ikema Y."/>
            <person name="Okamoto S."/>
            <person name="Okitani R."/>
            <person name="Kawakami T."/>
            <person name="Noguchi S."/>
            <person name="Itoh T."/>
            <person name="Shigeta K."/>
            <person name="Senba T."/>
            <person name="Matsumura K."/>
            <person name="Nakajima Y."/>
            <person name="Mizuno T."/>
            <person name="Morinaga M."/>
            <person name="Sasaki M."/>
            <person name="Togashi T."/>
            <person name="Oyama M."/>
            <person name="Hata H."/>
            <person name="Watanabe M."/>
            <person name="Komatsu T."/>
            <person name="Mizushima-Sugano J."/>
            <person name="Satoh T."/>
            <person name="Shirai Y."/>
            <person name="Takahashi Y."/>
            <person name="Nakagawa K."/>
            <person name="Okumura K."/>
            <person name="Nagase T."/>
            <person name="Nomura N."/>
            <person name="Kikuchi H."/>
            <person name="Masuho Y."/>
            <person name="Yamashita R."/>
            <person name="Nakai K."/>
            <person name="Yada T."/>
            <person name="Nakamura Y."/>
            <person name="Ohara O."/>
            <person name="Isogai T."/>
            <person name="Sugano S."/>
        </authorList>
    </citation>
    <scope>NUCLEOTIDE SEQUENCE [LARGE SCALE MRNA]</scope>
    <scope>VARIANT ARG-47</scope>
    <source>
        <tissue>Embryo</tissue>
    </source>
</reference>
<reference key="2">
    <citation type="journal article" date="2003" name="Nature">
        <title>The DNA sequence and analysis of human chromosome 14.</title>
        <authorList>
            <person name="Heilig R."/>
            <person name="Eckenberg R."/>
            <person name="Petit J.-L."/>
            <person name="Fonknechten N."/>
            <person name="Da Silva C."/>
            <person name="Cattolico L."/>
            <person name="Levy M."/>
            <person name="Barbe V."/>
            <person name="De Berardinis V."/>
            <person name="Ureta-Vidal A."/>
            <person name="Pelletier E."/>
            <person name="Vico V."/>
            <person name="Anthouard V."/>
            <person name="Rowen L."/>
            <person name="Madan A."/>
            <person name="Qin S."/>
            <person name="Sun H."/>
            <person name="Du H."/>
            <person name="Pepin K."/>
            <person name="Artiguenave F."/>
            <person name="Robert C."/>
            <person name="Cruaud C."/>
            <person name="Bruels T."/>
            <person name="Jaillon O."/>
            <person name="Friedlander L."/>
            <person name="Samson G."/>
            <person name="Brottier P."/>
            <person name="Cure S."/>
            <person name="Segurens B."/>
            <person name="Aniere F."/>
            <person name="Samain S."/>
            <person name="Crespeau H."/>
            <person name="Abbasi N."/>
            <person name="Aiach N."/>
            <person name="Boscus D."/>
            <person name="Dickhoff R."/>
            <person name="Dors M."/>
            <person name="Dubois I."/>
            <person name="Friedman C."/>
            <person name="Gouyvenoux M."/>
            <person name="James R."/>
            <person name="Madan A."/>
            <person name="Mairey-Estrada B."/>
            <person name="Mangenot S."/>
            <person name="Martins N."/>
            <person name="Menard M."/>
            <person name="Oztas S."/>
            <person name="Ratcliffe A."/>
            <person name="Shaffer T."/>
            <person name="Trask B."/>
            <person name="Vacherie B."/>
            <person name="Bellemere C."/>
            <person name="Belser C."/>
            <person name="Besnard-Gonnet M."/>
            <person name="Bartol-Mavel D."/>
            <person name="Boutard M."/>
            <person name="Briez-Silla S."/>
            <person name="Combette S."/>
            <person name="Dufosse-Laurent V."/>
            <person name="Ferron C."/>
            <person name="Lechaplais C."/>
            <person name="Louesse C."/>
            <person name="Muselet D."/>
            <person name="Magdelenat G."/>
            <person name="Pateau E."/>
            <person name="Petit E."/>
            <person name="Sirvain-Trukniewicz P."/>
            <person name="Trybou A."/>
            <person name="Vega-Czarny N."/>
            <person name="Bataille E."/>
            <person name="Bluet E."/>
            <person name="Bordelais I."/>
            <person name="Dubois M."/>
            <person name="Dumont C."/>
            <person name="Guerin T."/>
            <person name="Haffray S."/>
            <person name="Hammadi R."/>
            <person name="Muanga J."/>
            <person name="Pellouin V."/>
            <person name="Robert D."/>
            <person name="Wunderle E."/>
            <person name="Gauguet G."/>
            <person name="Roy A."/>
            <person name="Sainte-Marthe L."/>
            <person name="Verdier J."/>
            <person name="Verdier-Discala C."/>
            <person name="Hillier L.W."/>
            <person name="Fulton L."/>
            <person name="McPherson J."/>
            <person name="Matsuda F."/>
            <person name="Wilson R."/>
            <person name="Scarpelli C."/>
            <person name="Gyapay G."/>
            <person name="Wincker P."/>
            <person name="Saurin W."/>
            <person name="Quetier F."/>
            <person name="Waterston R."/>
            <person name="Hood L."/>
            <person name="Weissenbach J."/>
        </authorList>
    </citation>
    <scope>NUCLEOTIDE SEQUENCE [LARGE SCALE GENOMIC DNA]</scope>
</reference>
<reference key="3">
    <citation type="journal article" date="2004" name="Genome Res.">
        <title>The status, quality, and expansion of the NIH full-length cDNA project: the Mammalian Gene Collection (MGC).</title>
        <authorList>
            <consortium name="The MGC Project Team"/>
        </authorList>
    </citation>
    <scope>NUCLEOTIDE SEQUENCE [LARGE SCALE MRNA]</scope>
    <scope>VARIANT ARG-47</scope>
    <source>
        <tissue>Eye</tissue>
        <tissue>Pancreas</tissue>
        <tissue>Skin</tissue>
    </source>
</reference>
<reference key="4">
    <citation type="journal article" date="2008" name="EMBO Rep.">
        <title>A transcription cofactor required for the heat-shock response.</title>
        <authorList>
            <person name="Xu D."/>
            <person name="Zalmas L.P."/>
            <person name="La Thangue N.B."/>
        </authorList>
    </citation>
    <scope>FUNCTION</scope>
    <scope>INTERACTION WITH HSF1 AND EP300</scope>
    <scope>INDUCTION</scope>
</reference>
<reference key="5">
    <citation type="journal article" date="2008" name="Nat. Cell Biol.">
        <title>Arginine methylation regulates the p53 response.</title>
        <authorList>
            <person name="Jansson M."/>
            <person name="Durant S.T."/>
            <person name="Cho E.C."/>
            <person name="Sheahan S."/>
            <person name="Edelmann M."/>
            <person name="Kessler B."/>
            <person name="La Thangue N.B."/>
        </authorList>
    </citation>
    <scope>INTERACTION WITH PRMT5</scope>
</reference>
<reference key="6">
    <citation type="journal article" date="2011" name="BMC Syst. Biol.">
        <title>Initial characterization of the human central proteome.</title>
        <authorList>
            <person name="Burkard T.R."/>
            <person name="Planyavsky M."/>
            <person name="Kaupe I."/>
            <person name="Breitwieser F.P."/>
            <person name="Buerckstuemmer T."/>
            <person name="Bennett K.L."/>
            <person name="Superti-Furga G."/>
            <person name="Colinge J."/>
        </authorList>
    </citation>
    <scope>IDENTIFICATION BY MASS SPECTROMETRY [LARGE SCALE ANALYSIS]</scope>
</reference>
<reference key="7">
    <citation type="journal article" date="2012" name="Proc. Natl. Acad. Sci. U.S.A.">
        <title>The p53 cofactor Strap exhibits an unexpected TPR motif and oligonucleotide-binding (OB)-fold structure.</title>
        <authorList>
            <person name="Adams C.J."/>
            <person name="Pike A.C."/>
            <person name="Maniam S."/>
            <person name="Sharpe T.D."/>
            <person name="Coutts A.S."/>
            <person name="Knapp S."/>
            <person name="La Thangue N.B."/>
            <person name="Bullock A.N."/>
        </authorList>
    </citation>
    <scope>X-RAY CRYSTALLOGRAPHY (1.8 ANGSTROMS) OF 261-424</scope>
    <scope>TPR REPEATS</scope>
</reference>
<reference evidence="13" key="8">
    <citation type="journal article" date="2020" name="Science">
        <title>TTC5 mediates autoregulation of tubulin via mRNA degradation.</title>
        <authorList>
            <person name="Lin Z."/>
            <person name="Gasic I."/>
            <person name="Chandrasekaran V."/>
            <person name="Peters N."/>
            <person name="Shao S."/>
            <person name="Mitchison T.J."/>
            <person name="Hegde R.S."/>
        </authorList>
    </citation>
    <scope>STRUCTURE BY ELECTRON MICROSCOPY (3.11 ANGSTROMS)</scope>
    <scope>FUNCTION</scope>
    <scope>INTERACTION WITH RIBOSOME 60S SUBUNIT AND TUBULIN</scope>
    <scope>SUBCELLULAR LOCATION</scope>
    <scope>REGION</scope>
    <scope>MUTAGENESIS OF ASP-83; ARG-147; ASP-225; ASP-254; GLU-259; LYS-285 AND LYS-287</scope>
</reference>
<reference key="9">
    <citation type="journal article" date="2021" name="J. Med. Genet.">
        <title>Bi-allelic TTC5 variants cause delayed developmental milestones and intellectual disability.</title>
        <authorList>
            <person name="Rasheed A."/>
            <person name="Gumus E."/>
            <person name="Zaki M."/>
            <person name="Johnson K."/>
            <person name="Manzoor H."/>
            <person name="LaForce G."/>
            <person name="Ross D."/>
            <person name="McEvoy-Venneri J."/>
            <person name="Stanley V."/>
            <person name="Lee S."/>
            <person name="Virani A."/>
            <person name="Ben-Omran T."/>
            <person name="Gleeson J.G."/>
            <person name="Naz S."/>
            <person name="Schaffer A."/>
        </authorList>
    </citation>
    <scope>INVOLVEMENT IN NEDCAFD</scope>
    <scope>VARIANTS NEDCAFD CYS-210; VAL-231; 263-ARG--GLU-440 DEL AND 395-ARG--GLU-440 DEL</scope>
    <scope>CHARACTERIZATION OF VARIANT NEDCAFD 395-ARG--GLU-440 DEL</scope>
</reference>
<keyword id="KW-0002">3D-structure</keyword>
<keyword id="KW-0963">Cytoplasm</keyword>
<keyword id="KW-0968">Cytoplasmic vesicle</keyword>
<keyword id="KW-0225">Disease variant</keyword>
<keyword id="KW-0227">DNA damage</keyword>
<keyword id="KW-0234">DNA repair</keyword>
<keyword id="KW-0991">Intellectual disability</keyword>
<keyword id="KW-0496">Mitochondrion</keyword>
<keyword id="KW-0539">Nucleus</keyword>
<keyword id="KW-0597">Phosphoprotein</keyword>
<keyword id="KW-1267">Proteomics identification</keyword>
<keyword id="KW-1185">Reference proteome</keyword>
<keyword id="KW-0677">Repeat</keyword>
<keyword id="KW-0802">TPR repeat</keyword>
<name>TTC5_HUMAN</name>
<gene>
    <name evidence="12" type="primary">TTC5</name>
</gene>
<dbReference type="EMBL" id="AK074553">
    <property type="protein sequence ID" value="BAC11056.1"/>
    <property type="molecule type" value="mRNA"/>
</dbReference>
<dbReference type="EMBL" id="AL356019">
    <property type="status" value="NOT_ANNOTATED_CDS"/>
    <property type="molecule type" value="Genomic_DNA"/>
</dbReference>
<dbReference type="EMBL" id="BC008647">
    <property type="protein sequence ID" value="AAH08647.1"/>
    <property type="molecule type" value="mRNA"/>
</dbReference>
<dbReference type="EMBL" id="BC030822">
    <property type="protein sequence ID" value="AAH30822.1"/>
    <property type="molecule type" value="mRNA"/>
</dbReference>
<dbReference type="EMBL" id="BC053538">
    <property type="protein sequence ID" value="AAH53538.1"/>
    <property type="molecule type" value="mRNA"/>
</dbReference>
<dbReference type="CCDS" id="CCDS9546.1"/>
<dbReference type="RefSeq" id="NP_612385.2">
    <property type="nucleotide sequence ID" value="NM_138376.3"/>
</dbReference>
<dbReference type="PDB" id="2XVS">
    <property type="method" value="X-ray"/>
    <property type="resolution" value="1.80 A"/>
    <property type="chains" value="A=261-424"/>
</dbReference>
<dbReference type="PDB" id="6T59">
    <property type="method" value="EM"/>
    <property type="resolution" value="3.11 A"/>
    <property type="chains" value="TT=1-440"/>
</dbReference>
<dbReference type="PDB" id="7QWS">
    <property type="method" value="EM"/>
    <property type="resolution" value="3.40 A"/>
    <property type="chains" value="K=1-440"/>
</dbReference>
<dbReference type="PDB" id="8BPO">
    <property type="method" value="EM"/>
    <property type="resolution" value="2.80 A"/>
    <property type="chains" value="t2=1-440"/>
</dbReference>
<dbReference type="PDBsum" id="2XVS"/>
<dbReference type="PDBsum" id="6T59"/>
<dbReference type="PDBsum" id="7QWS"/>
<dbReference type="PDBsum" id="8BPO"/>
<dbReference type="EMDB" id="EMD-10380"/>
<dbReference type="EMDB" id="EMD-14193"/>
<dbReference type="EMDB" id="EMD-16155"/>
<dbReference type="SMR" id="Q8N0Z6"/>
<dbReference type="BioGRID" id="124889">
    <property type="interactions" value="64"/>
</dbReference>
<dbReference type="FunCoup" id="Q8N0Z6">
    <property type="interactions" value="4098"/>
</dbReference>
<dbReference type="IntAct" id="Q8N0Z6">
    <property type="interactions" value="36"/>
</dbReference>
<dbReference type="MINT" id="Q8N0Z6"/>
<dbReference type="STRING" id="9606.ENSP00000258821"/>
<dbReference type="GlyGen" id="Q8N0Z6">
    <property type="glycosylation" value="1 site, 1 O-linked glycan (1 site)"/>
</dbReference>
<dbReference type="iPTMnet" id="Q8N0Z6"/>
<dbReference type="PhosphoSitePlus" id="Q8N0Z6"/>
<dbReference type="BioMuta" id="TTC5"/>
<dbReference type="DMDM" id="229462802"/>
<dbReference type="jPOST" id="Q8N0Z6"/>
<dbReference type="MassIVE" id="Q8N0Z6"/>
<dbReference type="PaxDb" id="9606-ENSP00000258821"/>
<dbReference type="PeptideAtlas" id="Q8N0Z6"/>
<dbReference type="ProteomicsDB" id="71493"/>
<dbReference type="Pumba" id="Q8N0Z6"/>
<dbReference type="Antibodypedia" id="6802">
    <property type="antibodies" value="136 antibodies from 27 providers"/>
</dbReference>
<dbReference type="DNASU" id="91875"/>
<dbReference type="Ensembl" id="ENST00000258821.8">
    <property type="protein sequence ID" value="ENSP00000258821.3"/>
    <property type="gene ID" value="ENSG00000136319.12"/>
</dbReference>
<dbReference type="Ensembl" id="ENST00000708730.1">
    <property type="protein sequence ID" value="ENSP00000517308.1"/>
    <property type="gene ID" value="ENSG00000291781.1"/>
</dbReference>
<dbReference type="GeneID" id="91875"/>
<dbReference type="KEGG" id="hsa:91875"/>
<dbReference type="MANE-Select" id="ENST00000258821.8">
    <property type="protein sequence ID" value="ENSP00000258821.3"/>
    <property type="RefSeq nucleotide sequence ID" value="NM_138376.3"/>
    <property type="RefSeq protein sequence ID" value="NP_612385.2"/>
</dbReference>
<dbReference type="UCSC" id="uc001vwt.5">
    <property type="organism name" value="human"/>
</dbReference>
<dbReference type="AGR" id="HGNC:19274"/>
<dbReference type="CTD" id="91875"/>
<dbReference type="DisGeNET" id="91875"/>
<dbReference type="GeneCards" id="TTC5"/>
<dbReference type="HGNC" id="HGNC:19274">
    <property type="gene designation" value="TTC5"/>
</dbReference>
<dbReference type="HPA" id="ENSG00000136319">
    <property type="expression patterns" value="Low tissue specificity"/>
</dbReference>
<dbReference type="MalaCards" id="TTC5"/>
<dbReference type="MIM" id="619014">
    <property type="type" value="gene"/>
</dbReference>
<dbReference type="MIM" id="619244">
    <property type="type" value="phenotype"/>
</dbReference>
<dbReference type="neXtProt" id="NX_Q8N0Z6"/>
<dbReference type="OpenTargets" id="ENSG00000136319"/>
<dbReference type="Orphanet" id="88616">
    <property type="disease" value="Autosomal recessive non-syndromic intellectual disability"/>
</dbReference>
<dbReference type="PharmGKB" id="PA134919164"/>
<dbReference type="VEuPathDB" id="HostDB:ENSG00000136319"/>
<dbReference type="eggNOG" id="ENOG502QQ6C">
    <property type="taxonomic scope" value="Eukaryota"/>
</dbReference>
<dbReference type="GeneTree" id="ENSGT00390000006227"/>
<dbReference type="HOGENOM" id="CLU_026886_2_1_1"/>
<dbReference type="InParanoid" id="Q8N0Z6"/>
<dbReference type="OMA" id="DECKGYE"/>
<dbReference type="OrthoDB" id="423589at2759"/>
<dbReference type="PAN-GO" id="Q8N0Z6">
    <property type="GO annotations" value="0 GO annotations based on evolutionary models"/>
</dbReference>
<dbReference type="PhylomeDB" id="Q8N0Z6"/>
<dbReference type="TreeFam" id="TF316804"/>
<dbReference type="PathwayCommons" id="Q8N0Z6"/>
<dbReference type="Reactome" id="R-HSA-6804760">
    <property type="pathway name" value="Regulation of TP53 Activity through Methylation"/>
</dbReference>
<dbReference type="SignaLink" id="Q8N0Z6"/>
<dbReference type="SIGNOR" id="Q8N0Z6"/>
<dbReference type="BioGRID-ORCS" id="91875">
    <property type="hits" value="23 hits in 1158 CRISPR screens"/>
</dbReference>
<dbReference type="ChiTaRS" id="TTC5">
    <property type="organism name" value="human"/>
</dbReference>
<dbReference type="EvolutionaryTrace" id="Q8N0Z6"/>
<dbReference type="GenomeRNAi" id="91875"/>
<dbReference type="Pharos" id="Q8N0Z6">
    <property type="development level" value="Tbio"/>
</dbReference>
<dbReference type="PRO" id="PR:Q8N0Z6"/>
<dbReference type="Proteomes" id="UP000005640">
    <property type="component" value="Chromosome 14"/>
</dbReference>
<dbReference type="RNAct" id="Q8N0Z6">
    <property type="molecule type" value="protein"/>
</dbReference>
<dbReference type="Bgee" id="ENSG00000136319">
    <property type="expression patterns" value="Expressed in secondary oocyte and 154 other cell types or tissues"/>
</dbReference>
<dbReference type="ExpressionAtlas" id="Q8N0Z6">
    <property type="expression patterns" value="baseline and differential"/>
</dbReference>
<dbReference type="GO" id="GO:0031410">
    <property type="term" value="C:cytoplasmic vesicle"/>
    <property type="evidence" value="ECO:0000250"/>
    <property type="project" value="UniProtKB"/>
</dbReference>
<dbReference type="GO" id="GO:0005829">
    <property type="term" value="C:cytosol"/>
    <property type="evidence" value="ECO:0000314"/>
    <property type="project" value="UniProtKB"/>
</dbReference>
<dbReference type="GO" id="GO:0005759">
    <property type="term" value="C:mitochondrial matrix"/>
    <property type="evidence" value="ECO:0007669"/>
    <property type="project" value="UniProtKB-SubCell"/>
</dbReference>
<dbReference type="GO" id="GO:0005739">
    <property type="term" value="C:mitochondrion"/>
    <property type="evidence" value="ECO:0000250"/>
    <property type="project" value="UniProtKB"/>
</dbReference>
<dbReference type="GO" id="GO:0005654">
    <property type="term" value="C:nucleoplasm"/>
    <property type="evidence" value="ECO:0000314"/>
    <property type="project" value="HPA"/>
</dbReference>
<dbReference type="GO" id="GO:0003682">
    <property type="term" value="F:chromatin binding"/>
    <property type="evidence" value="ECO:0007669"/>
    <property type="project" value="Ensembl"/>
</dbReference>
<dbReference type="GO" id="GO:0003677">
    <property type="term" value="F:DNA binding"/>
    <property type="evidence" value="ECO:0007669"/>
    <property type="project" value="Ensembl"/>
</dbReference>
<dbReference type="GO" id="GO:0043022">
    <property type="term" value="F:ribosome binding"/>
    <property type="evidence" value="ECO:0000315"/>
    <property type="project" value="UniProtKB"/>
</dbReference>
<dbReference type="GO" id="GO:0009267">
    <property type="term" value="P:cellular response to starvation"/>
    <property type="evidence" value="ECO:0000250"/>
    <property type="project" value="UniProtKB"/>
</dbReference>
<dbReference type="GO" id="GO:0006974">
    <property type="term" value="P:DNA damage response"/>
    <property type="evidence" value="ECO:0000250"/>
    <property type="project" value="UniProtKB"/>
</dbReference>
<dbReference type="GO" id="GO:0006281">
    <property type="term" value="P:DNA repair"/>
    <property type="evidence" value="ECO:0007669"/>
    <property type="project" value="UniProtKB-KW"/>
</dbReference>
<dbReference type="GO" id="GO:0061014">
    <property type="term" value="P:positive regulation of mRNA catabolic process"/>
    <property type="evidence" value="ECO:0000315"/>
    <property type="project" value="UniProtKB"/>
</dbReference>
<dbReference type="GO" id="GO:0045944">
    <property type="term" value="P:positive regulation of transcription by RNA polymerase II"/>
    <property type="evidence" value="ECO:0007669"/>
    <property type="project" value="Ensembl"/>
</dbReference>
<dbReference type="FunFam" id="1.25.40.10:FF:000194">
    <property type="entry name" value="Tetratricopeptide repeat domain 5"/>
    <property type="match status" value="1"/>
</dbReference>
<dbReference type="FunFam" id="2.40.50.550:FF:000001">
    <property type="entry name" value="Tetratricopeptide repeat domain 5"/>
    <property type="match status" value="1"/>
</dbReference>
<dbReference type="Gene3D" id="2.40.50.550">
    <property type="match status" value="1"/>
</dbReference>
<dbReference type="Gene3D" id="1.25.40.10">
    <property type="entry name" value="Tetratricopeptide repeat domain"/>
    <property type="match status" value="1"/>
</dbReference>
<dbReference type="InterPro" id="IPR011990">
    <property type="entry name" value="TPR-like_helical_dom_sf"/>
</dbReference>
<dbReference type="InterPro" id="IPR019734">
    <property type="entry name" value="TPR_rpt"/>
</dbReference>
<dbReference type="InterPro" id="IPR032076">
    <property type="entry name" value="TTC5_OB"/>
</dbReference>
<dbReference type="InterPro" id="IPR038645">
    <property type="entry name" value="TTC5_OB_sf"/>
</dbReference>
<dbReference type="Pfam" id="PF16669">
    <property type="entry name" value="TTC5_OB"/>
    <property type="match status" value="1"/>
</dbReference>
<dbReference type="SMART" id="SM00028">
    <property type="entry name" value="TPR"/>
    <property type="match status" value="2"/>
</dbReference>
<dbReference type="SUPFAM" id="SSF48452">
    <property type="entry name" value="TPR-like"/>
    <property type="match status" value="1"/>
</dbReference>
<dbReference type="PROSITE" id="PS50005">
    <property type="entry name" value="TPR"/>
    <property type="match status" value="2"/>
</dbReference>
<dbReference type="PROSITE" id="PS50293">
    <property type="entry name" value="TPR_REGION"/>
    <property type="match status" value="2"/>
</dbReference>
<evidence type="ECO:0000250" key="1">
    <source>
        <dbReference type="UniProtKB" id="Q99LG4"/>
    </source>
</evidence>
<evidence type="ECO:0000255" key="2">
    <source>
        <dbReference type="PROSITE-ProRule" id="PRU00339"/>
    </source>
</evidence>
<evidence type="ECO:0000269" key="3">
    <source>
    </source>
</evidence>
<evidence type="ECO:0000269" key="4">
    <source>
    </source>
</evidence>
<evidence type="ECO:0000269" key="5">
    <source>
    </source>
</evidence>
<evidence type="ECO:0000269" key="6">
    <source>
    </source>
</evidence>
<evidence type="ECO:0000269" key="7">
    <source>
    </source>
</evidence>
<evidence type="ECO:0000269" key="8">
    <source>
    </source>
</evidence>
<evidence type="ECO:0000269" key="9">
    <source>
    </source>
</evidence>
<evidence type="ECO:0000303" key="10">
    <source>
    </source>
</evidence>
<evidence type="ECO:0000303" key="11">
    <source>
    </source>
</evidence>
<evidence type="ECO:0000312" key="12">
    <source>
        <dbReference type="HGNC" id="HGNC:19274"/>
    </source>
</evidence>
<evidence type="ECO:0007744" key="13">
    <source>
        <dbReference type="PDB" id="6T59"/>
    </source>
</evidence>
<evidence type="ECO:0007829" key="14">
    <source>
        <dbReference type="PDB" id="2XVS"/>
    </source>
</evidence>
<organism>
    <name type="scientific">Homo sapiens</name>
    <name type="common">Human</name>
    <dbReference type="NCBI Taxonomy" id="9606"/>
    <lineage>
        <taxon>Eukaryota</taxon>
        <taxon>Metazoa</taxon>
        <taxon>Chordata</taxon>
        <taxon>Craniata</taxon>
        <taxon>Vertebrata</taxon>
        <taxon>Euteleostomi</taxon>
        <taxon>Mammalia</taxon>
        <taxon>Eutheria</taxon>
        <taxon>Euarchontoglires</taxon>
        <taxon>Primates</taxon>
        <taxon>Haplorrhini</taxon>
        <taxon>Catarrhini</taxon>
        <taxon>Hominidae</taxon>
        <taxon>Homo</taxon>
    </lineage>
</organism>
<accession>Q8N0Z6</accession>
<accession>A8MQ18</accession>
<accession>Q96HF9</accession>